<evidence type="ECO:0000250" key="1">
    <source>
        <dbReference type="UniProtKB" id="O43776"/>
    </source>
</evidence>
<evidence type="ECO:0000250" key="2">
    <source>
        <dbReference type="UniProtKB" id="Q8BP47"/>
    </source>
</evidence>
<evidence type="ECO:0000256" key="3">
    <source>
        <dbReference type="SAM" id="MobiDB-lite"/>
    </source>
</evidence>
<evidence type="ECO:0000305" key="4"/>
<dbReference type="EC" id="6.1.1.22" evidence="1"/>
<dbReference type="EMBL" id="AB169753">
    <property type="protein sequence ID" value="BAE01834.1"/>
    <property type="molecule type" value="mRNA"/>
</dbReference>
<dbReference type="SMR" id="Q4R4Z1"/>
<dbReference type="STRING" id="9541.ENSMFAP00000018369"/>
<dbReference type="eggNOG" id="KOG0555">
    <property type="taxonomic scope" value="Eukaryota"/>
</dbReference>
<dbReference type="Proteomes" id="UP000233100">
    <property type="component" value="Unplaced"/>
</dbReference>
<dbReference type="GO" id="GO:0005737">
    <property type="term" value="C:cytoplasm"/>
    <property type="evidence" value="ECO:0007669"/>
    <property type="project" value="UniProtKB-SubCell"/>
</dbReference>
<dbReference type="GO" id="GO:0004816">
    <property type="term" value="F:asparagine-tRNA ligase activity"/>
    <property type="evidence" value="ECO:0000250"/>
    <property type="project" value="UniProtKB"/>
</dbReference>
<dbReference type="GO" id="GO:0005524">
    <property type="term" value="F:ATP binding"/>
    <property type="evidence" value="ECO:0007669"/>
    <property type="project" value="UniProtKB-KW"/>
</dbReference>
<dbReference type="GO" id="GO:0031728">
    <property type="term" value="F:CCR3 chemokine receptor binding"/>
    <property type="evidence" value="ECO:0000250"/>
    <property type="project" value="UniProtKB"/>
</dbReference>
<dbReference type="GO" id="GO:0003676">
    <property type="term" value="F:nucleic acid binding"/>
    <property type="evidence" value="ECO:0007669"/>
    <property type="project" value="InterPro"/>
</dbReference>
<dbReference type="GO" id="GO:0046983">
    <property type="term" value="F:protein dimerization activity"/>
    <property type="evidence" value="ECO:0000250"/>
    <property type="project" value="UniProtKB"/>
</dbReference>
<dbReference type="GO" id="GO:0006421">
    <property type="term" value="P:asparaginyl-tRNA aminoacylation"/>
    <property type="evidence" value="ECO:0000250"/>
    <property type="project" value="UniProtKB"/>
</dbReference>
<dbReference type="GO" id="GO:0016477">
    <property type="term" value="P:cell migration"/>
    <property type="evidence" value="ECO:0000250"/>
    <property type="project" value="UniProtKB"/>
</dbReference>
<dbReference type="CDD" id="cd04323">
    <property type="entry name" value="AsnRS_cyto_like_N"/>
    <property type="match status" value="1"/>
</dbReference>
<dbReference type="CDD" id="cd00776">
    <property type="entry name" value="AsxRS_core"/>
    <property type="match status" value="1"/>
</dbReference>
<dbReference type="FunFam" id="2.40.50.140:FF:000151">
    <property type="entry name" value="Asparagine--tRNA ligase, cytoplasmic"/>
    <property type="match status" value="1"/>
</dbReference>
<dbReference type="FunFam" id="3.30.930.10:FF:000040">
    <property type="entry name" value="Asparagine--tRNA ligase, cytoplasmic"/>
    <property type="match status" value="1"/>
</dbReference>
<dbReference type="FunFam" id="3.30.1910.20:FF:000001">
    <property type="entry name" value="asparagine--tRNA ligase, cytoplasmic"/>
    <property type="match status" value="1"/>
</dbReference>
<dbReference type="Gene3D" id="3.30.1910.20">
    <property type="entry name" value="asparaginyl-tRNA synthetase, N-terminal domain"/>
    <property type="match status" value="1"/>
</dbReference>
<dbReference type="Gene3D" id="3.30.930.10">
    <property type="entry name" value="Bira Bifunctional Protein, Domain 2"/>
    <property type="match status" value="1"/>
</dbReference>
<dbReference type="Gene3D" id="2.40.50.140">
    <property type="entry name" value="Nucleic acid-binding proteins"/>
    <property type="match status" value="1"/>
</dbReference>
<dbReference type="InterPro" id="IPR004364">
    <property type="entry name" value="Aa-tRNA-synt_II"/>
</dbReference>
<dbReference type="InterPro" id="IPR006195">
    <property type="entry name" value="aa-tRNA-synth_II"/>
</dbReference>
<dbReference type="InterPro" id="IPR045864">
    <property type="entry name" value="aa-tRNA-synth_II/BPL/LPL"/>
</dbReference>
<dbReference type="InterPro" id="IPR004522">
    <property type="entry name" value="Asn-tRNA-ligase"/>
</dbReference>
<dbReference type="InterPro" id="IPR048952">
    <property type="entry name" value="AsnRS_N"/>
</dbReference>
<dbReference type="InterPro" id="IPR002312">
    <property type="entry name" value="Asp/Asn-tRNA-synth_IIb"/>
</dbReference>
<dbReference type="InterPro" id="IPR012340">
    <property type="entry name" value="NA-bd_OB-fold"/>
</dbReference>
<dbReference type="InterPro" id="IPR004365">
    <property type="entry name" value="NA-bd_OB_tRNA"/>
</dbReference>
<dbReference type="NCBIfam" id="TIGR00457">
    <property type="entry name" value="asnS"/>
    <property type="match status" value="1"/>
</dbReference>
<dbReference type="PANTHER" id="PTHR22594:SF16">
    <property type="entry name" value="ASPARAGINE--TRNA LIGASE, CYTOPLASMIC"/>
    <property type="match status" value="1"/>
</dbReference>
<dbReference type="PANTHER" id="PTHR22594">
    <property type="entry name" value="ASPARTYL/LYSYL-TRNA SYNTHETASE"/>
    <property type="match status" value="1"/>
</dbReference>
<dbReference type="Pfam" id="PF20917">
    <property type="entry name" value="AsnRS_N"/>
    <property type="match status" value="1"/>
</dbReference>
<dbReference type="Pfam" id="PF00152">
    <property type="entry name" value="tRNA-synt_2"/>
    <property type="match status" value="1"/>
</dbReference>
<dbReference type="Pfam" id="PF01336">
    <property type="entry name" value="tRNA_anti-codon"/>
    <property type="match status" value="1"/>
</dbReference>
<dbReference type="PRINTS" id="PR01042">
    <property type="entry name" value="TRNASYNTHASP"/>
</dbReference>
<dbReference type="SUPFAM" id="SSF55681">
    <property type="entry name" value="Class II aaRS and biotin synthetases"/>
    <property type="match status" value="1"/>
</dbReference>
<dbReference type="SUPFAM" id="SSF50249">
    <property type="entry name" value="Nucleic acid-binding proteins"/>
    <property type="match status" value="1"/>
</dbReference>
<dbReference type="PROSITE" id="PS50862">
    <property type="entry name" value="AA_TRNA_LIGASE_II"/>
    <property type="match status" value="1"/>
</dbReference>
<protein>
    <recommendedName>
        <fullName evidence="4">Asparagine--tRNA ligase, cytoplasmic</fullName>
        <ecNumber evidence="1">6.1.1.22</ecNumber>
    </recommendedName>
    <alternativeName>
        <fullName evidence="1">Asparaginyl-tRNA synthetase</fullName>
        <shortName evidence="1">AsnRS</shortName>
    </alternativeName>
    <alternativeName>
        <fullName evidence="1">Asparaginyl-tRNA synthetase 1</fullName>
    </alternativeName>
</protein>
<feature type="chain" id="PRO_0000341690" description="Asparagine--tRNA ligase, cytoplasmic">
    <location>
        <begin position="1"/>
        <end position="558"/>
    </location>
</feature>
<feature type="region of interest" description="Disordered" evidence="3">
    <location>
        <begin position="79"/>
        <end position="101"/>
    </location>
</feature>
<feature type="compositionally biased region" description="Basic and acidic residues" evidence="3">
    <location>
        <begin position="81"/>
        <end position="101"/>
    </location>
</feature>
<feature type="modified residue" description="Phosphoserine" evidence="1">
    <location>
        <position position="71"/>
    </location>
</feature>
<feature type="modified residue" description="N6-acetyllysine" evidence="1">
    <location>
        <position position="254"/>
    </location>
</feature>
<feature type="modified residue" description="N6-acetyllysine" evidence="2">
    <location>
        <position position="500"/>
    </location>
</feature>
<name>SYNC_MACFA</name>
<proteinExistence type="evidence at transcript level"/>
<sequence>MSLEVTRATAGMVLELYVSDREGSDATGDGTKEKPFKTGLKALMTVGKEPFPTIYVDSQKENERWNVISKSQLKNIKKMWHREQMKSESREKKEAEDSLRREKNLEEAKKITIKNDPALPEPKCVKISALEGYRGQRVKVFGWVHRLRRQGKNLMFLVLRDGTGYLQCVLADELCQCYNGVLLSTESSVAVYGMLNLTPKGKQAPGGHELSCDFWELIGLAPAGGADNLINEESDVDVQLNNRHMMIRGENMSKILKARSMITRCFRDHFFDRGYHEITPPSLVQTQVEGGATLFKLNYFGEEAFLTQSSQLYLETCLPALGDVFCIAQSYRAEQSRTRRHLAEYTHVEAECPLLTFDDLLNRLEDLVCDVVDRILKSPAGSIVYELNPNFQPPKRPFKRMNYSDAIIWLKEHDIKKEDGTFYEFGEDIPEAPERLMTDTINEPILLCRFPVEIKSFYMQRCPEDSCLTESVDVLMPNVGEIVGGSMRTSDAEEILAGYKREGIDPAPYYWYTDQRKYGTCPHGGYGLGLERFLTWILNRYHIRDVCLYPRFVQRCTP</sequence>
<accession>Q4R4Z1</accession>
<gene>
    <name evidence="1" type="primary">NARS1</name>
    <name evidence="1" type="synonym">NARS</name>
    <name type="ORF">QnpA-18508</name>
</gene>
<organism>
    <name type="scientific">Macaca fascicularis</name>
    <name type="common">Crab-eating macaque</name>
    <name type="synonym">Cynomolgus monkey</name>
    <dbReference type="NCBI Taxonomy" id="9541"/>
    <lineage>
        <taxon>Eukaryota</taxon>
        <taxon>Metazoa</taxon>
        <taxon>Chordata</taxon>
        <taxon>Craniata</taxon>
        <taxon>Vertebrata</taxon>
        <taxon>Euteleostomi</taxon>
        <taxon>Mammalia</taxon>
        <taxon>Eutheria</taxon>
        <taxon>Euarchontoglires</taxon>
        <taxon>Primates</taxon>
        <taxon>Haplorrhini</taxon>
        <taxon>Catarrhini</taxon>
        <taxon>Cercopithecidae</taxon>
        <taxon>Cercopithecinae</taxon>
        <taxon>Macaca</taxon>
    </lineage>
</organism>
<comment type="function">
    <text evidence="1">Catalyzes the attachment of asparagine to tRNA(Asn) in a two-step reaction: asparagine is first activated by ATP to form Asn-AMP and then transferred to the acceptor end of tRNA(Asn). In addition to its essential role in protein synthesis, acts as a signaling molecule that induced migration of CCR3-expressing cells. Has an essential role in the development of the cerebral cortex, being required for proper proliferation of radial glial cells.</text>
</comment>
<comment type="catalytic activity">
    <reaction evidence="1">
        <text>tRNA(Asn) + L-asparagine + ATP = L-asparaginyl-tRNA(Asn) + AMP + diphosphate + H(+)</text>
        <dbReference type="Rhea" id="RHEA:11180"/>
        <dbReference type="Rhea" id="RHEA-COMP:9659"/>
        <dbReference type="Rhea" id="RHEA-COMP:9674"/>
        <dbReference type="ChEBI" id="CHEBI:15378"/>
        <dbReference type="ChEBI" id="CHEBI:30616"/>
        <dbReference type="ChEBI" id="CHEBI:33019"/>
        <dbReference type="ChEBI" id="CHEBI:58048"/>
        <dbReference type="ChEBI" id="CHEBI:78442"/>
        <dbReference type="ChEBI" id="CHEBI:78515"/>
        <dbReference type="ChEBI" id="CHEBI:456215"/>
        <dbReference type="EC" id="6.1.1.22"/>
    </reaction>
</comment>
<comment type="subunit">
    <text evidence="1">Homodimer.</text>
</comment>
<comment type="subcellular location">
    <subcellularLocation>
        <location evidence="1">Cytoplasm</location>
    </subcellularLocation>
</comment>
<comment type="domain">
    <text evidence="1">The N-terminal domain (1-77) recruits and activates specific immune cells by interacting with CCR3-expressing cells.</text>
</comment>
<comment type="similarity">
    <text evidence="4">Belongs to the class-II aminoacyl-tRNA synthetase family.</text>
</comment>
<reference key="1">
    <citation type="submission" date="2005-06" db="EMBL/GenBank/DDBJ databases">
        <title>DNA sequences of macaque genes expressed in brain or testis and its evolutionary implications.</title>
        <authorList>
            <consortium name="International consortium for macaque cDNA sequencing and analysis"/>
        </authorList>
    </citation>
    <scope>NUCLEOTIDE SEQUENCE [LARGE SCALE MRNA]</scope>
    <source>
        <tissue>Parietal cortex</tissue>
    </source>
</reference>
<keyword id="KW-0007">Acetylation</keyword>
<keyword id="KW-0030">Aminoacyl-tRNA synthetase</keyword>
<keyword id="KW-0067">ATP-binding</keyword>
<keyword id="KW-0963">Cytoplasm</keyword>
<keyword id="KW-0436">Ligase</keyword>
<keyword id="KW-0547">Nucleotide-binding</keyword>
<keyword id="KW-0597">Phosphoprotein</keyword>
<keyword id="KW-0648">Protein biosynthesis</keyword>
<keyword id="KW-1185">Reference proteome</keyword>